<sequence>MANEEQGSILKALDVAKTQWYHVTAVVVSGMGFFTDSYDLFVISLITKLLGRIYYQVPGSSSPGSLPDGISAAVSGVAFAGTFIGQIFFGCLGDKLGRKRVYGLTLLIMTICSICSGLSLGRDPKTVMVTLCFFRFWLGFGIGGDYPLSATIMSEYSNKRTRGAFIAAVFGMQGIGILAAGAVSLLVSAVFESKFPSRAYILDGAASTVPQADYVWRIILMVGALPALLTYYWRMKMPETARYTALVSKNAEQAALDMTKVLNVDIEASAAKNDQARVSSDEFGLFSMKFLRRHGLHLLGTASTWFLLDIAFYSQNLFQKDIFTTIGWLPSAKTMNAIQELYMIAKAQTIIACCSTVPGYFFTVGFIDYMGRKKIQIMGFAMMTIFMLSLAIPYHHWTLPANRIGFVVLYSFTFFFSNFGPNATTFIVPAEIFPARIRSTCHGISAASGKAGAMVGSFGFSALVKALGMSNTLYIMAGINLLGLLLTFTIPETNGKSLEELSGETEPEKIKEKIVV</sequence>
<organism>
    <name type="scientific">Arabidopsis thaliana</name>
    <name type="common">Mouse-ear cress</name>
    <dbReference type="NCBI Taxonomy" id="3702"/>
    <lineage>
        <taxon>Eukaryota</taxon>
        <taxon>Viridiplantae</taxon>
        <taxon>Streptophyta</taxon>
        <taxon>Embryophyta</taxon>
        <taxon>Tracheophyta</taxon>
        <taxon>Spermatophyta</taxon>
        <taxon>Magnoliopsida</taxon>
        <taxon>eudicotyledons</taxon>
        <taxon>Gunneridae</taxon>
        <taxon>Pentapetalae</taxon>
        <taxon>rosids</taxon>
        <taxon>malvids</taxon>
        <taxon>Brassicales</taxon>
        <taxon>Brassicaceae</taxon>
        <taxon>Camelineae</taxon>
        <taxon>Arabidopsis</taxon>
    </lineage>
</organism>
<dbReference type="EMBL" id="AB005746">
    <property type="protein sequence ID" value="BAA34390.1"/>
    <property type="molecule type" value="Genomic_DNA"/>
</dbReference>
<dbReference type="EMBL" id="AB025638">
    <property type="protein sequence ID" value="BAA97413.1"/>
    <property type="molecule type" value="Genomic_DNA"/>
</dbReference>
<dbReference type="EMBL" id="CP002688">
    <property type="protein sequence ID" value="AED94947.1"/>
    <property type="molecule type" value="Genomic_DNA"/>
</dbReference>
<dbReference type="RefSeq" id="NP_199148.1">
    <property type="nucleotide sequence ID" value="NM_123700.1"/>
</dbReference>
<dbReference type="SMR" id="Q9ZWT3"/>
<dbReference type="BioGRID" id="19602">
    <property type="interactions" value="1"/>
</dbReference>
<dbReference type="FunCoup" id="Q9ZWT3">
    <property type="interactions" value="326"/>
</dbReference>
<dbReference type="STRING" id="3702.Q9ZWT3"/>
<dbReference type="iPTMnet" id="Q9ZWT3"/>
<dbReference type="PaxDb" id="3702-AT5G43340.1"/>
<dbReference type="ProteomicsDB" id="235084"/>
<dbReference type="EnsemblPlants" id="AT5G43340.1">
    <property type="protein sequence ID" value="AT5G43340.1"/>
    <property type="gene ID" value="AT5G43340"/>
</dbReference>
<dbReference type="GeneID" id="834352"/>
<dbReference type="Gramene" id="AT5G43340.1">
    <property type="protein sequence ID" value="AT5G43340.1"/>
    <property type="gene ID" value="AT5G43340"/>
</dbReference>
<dbReference type="KEGG" id="ath:AT5G43340"/>
<dbReference type="Araport" id="AT5G43340"/>
<dbReference type="TAIR" id="AT5G43340">
    <property type="gene designation" value="PHT1"/>
</dbReference>
<dbReference type="eggNOG" id="KOG0252">
    <property type="taxonomic scope" value="Eukaryota"/>
</dbReference>
<dbReference type="HOGENOM" id="CLU_001265_46_14_1"/>
<dbReference type="InParanoid" id="Q9ZWT3"/>
<dbReference type="OMA" id="FAKNDQA"/>
<dbReference type="PhylomeDB" id="Q9ZWT3"/>
<dbReference type="PRO" id="PR:Q9ZWT3"/>
<dbReference type="Proteomes" id="UP000006548">
    <property type="component" value="Chromosome 5"/>
</dbReference>
<dbReference type="ExpressionAtlas" id="Q9ZWT3">
    <property type="expression patterns" value="baseline and differential"/>
</dbReference>
<dbReference type="GO" id="GO:0016020">
    <property type="term" value="C:membrane"/>
    <property type="evidence" value="ECO:0007669"/>
    <property type="project" value="UniProtKB-SubCell"/>
</dbReference>
<dbReference type="GO" id="GO:0005315">
    <property type="term" value="F:phosphate transmembrane transporter activity"/>
    <property type="evidence" value="ECO:0000250"/>
    <property type="project" value="TAIR"/>
</dbReference>
<dbReference type="GO" id="GO:0015293">
    <property type="term" value="F:symporter activity"/>
    <property type="evidence" value="ECO:0007669"/>
    <property type="project" value="UniProtKB-KW"/>
</dbReference>
<dbReference type="GO" id="GO:0006817">
    <property type="term" value="P:phosphate ion transport"/>
    <property type="evidence" value="ECO:0007669"/>
    <property type="project" value="UniProtKB-KW"/>
</dbReference>
<dbReference type="CDD" id="cd17364">
    <property type="entry name" value="MFS_PhT"/>
    <property type="match status" value="1"/>
</dbReference>
<dbReference type="FunFam" id="1.20.1250.20:FF:000175">
    <property type="entry name" value="Inorganic phosphate transporter 1-6"/>
    <property type="match status" value="1"/>
</dbReference>
<dbReference type="Gene3D" id="1.20.1250.20">
    <property type="entry name" value="MFS general substrate transporter like domains"/>
    <property type="match status" value="1"/>
</dbReference>
<dbReference type="InterPro" id="IPR020846">
    <property type="entry name" value="MFS_dom"/>
</dbReference>
<dbReference type="InterPro" id="IPR005828">
    <property type="entry name" value="MFS_sugar_transport-like"/>
</dbReference>
<dbReference type="InterPro" id="IPR036259">
    <property type="entry name" value="MFS_trans_sf"/>
</dbReference>
<dbReference type="InterPro" id="IPR004738">
    <property type="entry name" value="Phos_permease"/>
</dbReference>
<dbReference type="InterPro" id="IPR005829">
    <property type="entry name" value="Sugar_transporter_CS"/>
</dbReference>
<dbReference type="NCBIfam" id="TIGR00887">
    <property type="entry name" value="2A0109"/>
    <property type="match status" value="1"/>
</dbReference>
<dbReference type="PANTHER" id="PTHR24064">
    <property type="entry name" value="SOLUTE CARRIER FAMILY 22 MEMBER"/>
    <property type="match status" value="1"/>
</dbReference>
<dbReference type="Pfam" id="PF00083">
    <property type="entry name" value="Sugar_tr"/>
    <property type="match status" value="1"/>
</dbReference>
<dbReference type="SUPFAM" id="SSF103473">
    <property type="entry name" value="MFS general substrate transporter"/>
    <property type="match status" value="1"/>
</dbReference>
<dbReference type="PROSITE" id="PS50850">
    <property type="entry name" value="MFS"/>
    <property type="match status" value="1"/>
</dbReference>
<dbReference type="PROSITE" id="PS00216">
    <property type="entry name" value="SUGAR_TRANSPORT_1"/>
    <property type="match status" value="1"/>
</dbReference>
<reference key="1">
    <citation type="journal article" date="1998" name="DNA Res.">
        <title>Phosphate transporter gene family of Arabidopsis thaliana.</title>
        <authorList>
            <person name="Okumura S."/>
            <person name="Mitsukawa N."/>
            <person name="Shirano Y."/>
            <person name="Shibata D."/>
        </authorList>
    </citation>
    <scope>NUCLEOTIDE SEQUENCE [GENOMIC DNA]</scope>
    <source>
        <strain>cv. Columbia</strain>
    </source>
</reference>
<reference key="2">
    <citation type="journal article" date="2000" name="DNA Res.">
        <title>Structural analysis of Arabidopsis thaliana chromosome 5. X. Sequence features of the regions of 3,076,755 bp covered by sixty P1 and TAC clones.</title>
        <authorList>
            <person name="Sato S."/>
            <person name="Nakamura Y."/>
            <person name="Kaneko T."/>
            <person name="Katoh T."/>
            <person name="Asamizu E."/>
            <person name="Kotani H."/>
            <person name="Tabata S."/>
        </authorList>
    </citation>
    <scope>NUCLEOTIDE SEQUENCE [LARGE SCALE GENOMIC DNA]</scope>
    <source>
        <strain>cv. Columbia</strain>
    </source>
</reference>
<reference key="3">
    <citation type="journal article" date="2017" name="Plant J.">
        <title>Araport11: a complete reannotation of the Arabidopsis thaliana reference genome.</title>
        <authorList>
            <person name="Cheng C.Y."/>
            <person name="Krishnakumar V."/>
            <person name="Chan A.P."/>
            <person name="Thibaud-Nissen F."/>
            <person name="Schobel S."/>
            <person name="Town C.D."/>
        </authorList>
    </citation>
    <scope>GENOME REANNOTATION</scope>
    <source>
        <strain>cv. Columbia</strain>
    </source>
</reference>
<reference key="4">
    <citation type="journal article" date="2002" name="Plant J.">
        <title>Expression analysis suggests novel roles for members of the Pht1 family of phosphate transporters in Arabidopsis.</title>
        <authorList>
            <person name="Mudge S.R."/>
            <person name="Rae A.L."/>
            <person name="Diatloff E."/>
            <person name="Smith F.W."/>
        </authorList>
    </citation>
    <scope>TISSUE SPECIFICITY</scope>
    <scope>GENE FAMILY</scope>
    <scope>NOMENCLATURE</scope>
</reference>
<reference key="5">
    <citation type="journal article" date="2012" name="Mol. Cell. Proteomics">
        <title>Comparative large-scale characterisation of plant vs. mammal proteins reveals similar and idiosyncratic N-alpha acetylation features.</title>
        <authorList>
            <person name="Bienvenut W.V."/>
            <person name="Sumpton D."/>
            <person name="Martinez A."/>
            <person name="Lilla S."/>
            <person name="Espagne C."/>
            <person name="Meinnel T."/>
            <person name="Giglione C."/>
        </authorList>
    </citation>
    <scope>ACETYLATION [LARGE SCALE ANALYSIS] AT ALA-2</scope>
    <scope>CLEAVAGE OF INITIATOR METHIONINE [LARGE SCALE ANALYSIS]</scope>
    <scope>IDENTIFICATION BY MASS SPECTROMETRY [LARGE SCALE ANALYSIS]</scope>
</reference>
<feature type="initiator methionine" description="Removed" evidence="5">
    <location>
        <position position="1"/>
    </location>
</feature>
<feature type="chain" id="PRO_0000050473" description="Probable inorganic phosphate transporter 1-6">
    <location>
        <begin position="2"/>
        <end position="516"/>
    </location>
</feature>
<feature type="topological domain" description="Cytoplasmic" evidence="2">
    <location>
        <begin position="2"/>
        <end position="25"/>
    </location>
</feature>
<feature type="transmembrane region" description="Helical" evidence="2">
    <location>
        <begin position="26"/>
        <end position="46"/>
    </location>
</feature>
<feature type="topological domain" description="Extracellular" evidence="2">
    <location>
        <begin position="47"/>
        <end position="71"/>
    </location>
</feature>
<feature type="transmembrane region" description="Helical" evidence="2">
    <location>
        <begin position="72"/>
        <end position="92"/>
    </location>
</feature>
<feature type="topological domain" description="Cytoplasmic" evidence="2">
    <location>
        <begin position="93"/>
        <end position="100"/>
    </location>
</feature>
<feature type="transmembrane region" description="Helical" evidence="2">
    <location>
        <begin position="101"/>
        <end position="121"/>
    </location>
</feature>
<feature type="topological domain" description="Extracellular" evidence="2">
    <location>
        <begin position="122"/>
        <end position="132"/>
    </location>
</feature>
<feature type="transmembrane region" description="Helical" evidence="2">
    <location>
        <begin position="133"/>
        <end position="153"/>
    </location>
</feature>
<feature type="topological domain" description="Cytoplasmic" evidence="2">
    <location>
        <begin position="154"/>
        <end position="162"/>
    </location>
</feature>
<feature type="transmembrane region" description="Helical" evidence="2">
    <location>
        <begin position="163"/>
        <end position="183"/>
    </location>
</feature>
<feature type="topological domain" description="Extracellular" evidence="2">
    <location>
        <begin position="184"/>
        <end position="212"/>
    </location>
</feature>
<feature type="transmembrane region" description="Helical" evidence="2">
    <location>
        <begin position="213"/>
        <end position="233"/>
    </location>
</feature>
<feature type="topological domain" description="Cytoplasmic" evidence="2">
    <location>
        <begin position="234"/>
        <end position="293"/>
    </location>
</feature>
<feature type="transmembrane region" description="Helical" evidence="2">
    <location>
        <begin position="294"/>
        <end position="314"/>
    </location>
</feature>
<feature type="topological domain" description="Extracellular" evidence="2">
    <location>
        <begin position="315"/>
        <end position="349"/>
    </location>
</feature>
<feature type="transmembrane region" description="Helical" evidence="2">
    <location>
        <begin position="350"/>
        <end position="370"/>
    </location>
</feature>
<feature type="topological domain" description="Cytoplasmic" evidence="2">
    <location>
        <begin position="371"/>
        <end position="374"/>
    </location>
</feature>
<feature type="transmembrane region" description="Helical" evidence="2">
    <location>
        <begin position="375"/>
        <end position="395"/>
    </location>
</feature>
<feature type="topological domain" description="Extracellular" evidence="2">
    <location>
        <begin position="396"/>
        <end position="403"/>
    </location>
</feature>
<feature type="transmembrane region" description="Helical" evidence="2">
    <location>
        <begin position="404"/>
        <end position="424"/>
    </location>
</feature>
<feature type="topological domain" description="Cytoplasmic" evidence="2">
    <location>
        <begin position="425"/>
        <end position="442"/>
    </location>
</feature>
<feature type="transmembrane region" description="Helical" evidence="2">
    <location>
        <begin position="443"/>
        <end position="463"/>
    </location>
</feature>
<feature type="topological domain" description="Extracellular" evidence="2">
    <location>
        <begin position="464"/>
        <end position="471"/>
    </location>
</feature>
<feature type="transmembrane region" description="Helical" evidence="2">
    <location>
        <begin position="472"/>
        <end position="492"/>
    </location>
</feature>
<feature type="topological domain" description="Cytoplasmic" evidence="2">
    <location>
        <begin position="493"/>
        <end position="516"/>
    </location>
</feature>
<feature type="modified residue" description="N-acetylalanine" evidence="5">
    <location>
        <position position="2"/>
    </location>
</feature>
<evidence type="ECO:0000250" key="1"/>
<evidence type="ECO:0000255" key="2"/>
<evidence type="ECO:0000269" key="3">
    <source>
    </source>
</evidence>
<evidence type="ECO:0000305" key="4"/>
<evidence type="ECO:0007744" key="5">
    <source>
    </source>
</evidence>
<proteinExistence type="evidence at protein level"/>
<gene>
    <name type="primary">PHT1-6</name>
    <name type="synonym">PHT6</name>
    <name type="ordered locus">At5g43340</name>
    <name type="ORF">MWF20.3</name>
</gene>
<keyword id="KW-0007">Acetylation</keyword>
<keyword id="KW-0472">Membrane</keyword>
<keyword id="KW-0592">Phosphate transport</keyword>
<keyword id="KW-1185">Reference proteome</keyword>
<keyword id="KW-0769">Symport</keyword>
<keyword id="KW-0812">Transmembrane</keyword>
<keyword id="KW-1133">Transmembrane helix</keyword>
<keyword id="KW-0813">Transport</keyword>
<name>PHT16_ARATH</name>
<protein>
    <recommendedName>
        <fullName>Probable inorganic phosphate transporter 1-6</fullName>
        <shortName>AtPht1;6</shortName>
    </recommendedName>
    <alternativeName>
        <fullName>H(+)/Pi cotransporter</fullName>
    </alternativeName>
</protein>
<accession>Q9ZWT3</accession>
<comment type="function">
    <text evidence="1">High-affinity transporter for external inorganic phosphate.</text>
</comment>
<comment type="subcellular location">
    <subcellularLocation>
        <location evidence="1">Membrane</location>
        <topology evidence="1">Multi-pass membrane protein</topology>
    </subcellularLocation>
</comment>
<comment type="tissue specificity">
    <text evidence="3">Expressed in anthers, tapetumand mature pollen and, to a lower extent, in hydathodes and vascular tissues of cotyledons of flowering plants.</text>
</comment>
<comment type="miscellaneous">
    <text>Although related to the sugar transporter family, it does not transport sugars.</text>
</comment>
<comment type="similarity">
    <text evidence="4">Belongs to the major facilitator superfamily. Phosphate:H(+) symporter (TC 2.A.1.9) family.</text>
</comment>